<dbReference type="EMBL" id="CP000580">
    <property type="protein sequence ID" value="ABO00448.1"/>
    <property type="molecule type" value="Genomic_DNA"/>
</dbReference>
<dbReference type="SMR" id="A3Q5M0"/>
<dbReference type="KEGG" id="mjl:Mjls_4682"/>
<dbReference type="HOGENOM" id="CLU_203263_0_0_11"/>
<dbReference type="BioCyc" id="MSP164757:G1G8C-4725-MONOMER"/>
<dbReference type="GO" id="GO:0015934">
    <property type="term" value="C:large ribosomal subunit"/>
    <property type="evidence" value="ECO:0007669"/>
    <property type="project" value="InterPro"/>
</dbReference>
<dbReference type="GO" id="GO:0003735">
    <property type="term" value="F:structural constituent of ribosome"/>
    <property type="evidence" value="ECO:0007669"/>
    <property type="project" value="InterPro"/>
</dbReference>
<dbReference type="GO" id="GO:0006412">
    <property type="term" value="P:translation"/>
    <property type="evidence" value="ECO:0007669"/>
    <property type="project" value="UniProtKB-UniRule"/>
</dbReference>
<dbReference type="HAMAP" id="MF_00340">
    <property type="entry name" value="Ribosomal_bL32"/>
    <property type="match status" value="1"/>
</dbReference>
<dbReference type="InterPro" id="IPR002677">
    <property type="entry name" value="Ribosomal_bL32"/>
</dbReference>
<dbReference type="InterPro" id="IPR011332">
    <property type="entry name" value="Ribosomal_zn-bd"/>
</dbReference>
<dbReference type="NCBIfam" id="TIGR01031">
    <property type="entry name" value="rpmF_bact"/>
    <property type="match status" value="1"/>
</dbReference>
<dbReference type="Pfam" id="PF01783">
    <property type="entry name" value="Ribosomal_L32p"/>
    <property type="match status" value="1"/>
</dbReference>
<dbReference type="SUPFAM" id="SSF57829">
    <property type="entry name" value="Zn-binding ribosomal proteins"/>
    <property type="match status" value="1"/>
</dbReference>
<evidence type="ECO:0000255" key="1">
    <source>
        <dbReference type="HAMAP-Rule" id="MF_00340"/>
    </source>
</evidence>
<evidence type="ECO:0000256" key="2">
    <source>
        <dbReference type="SAM" id="MobiDB-lite"/>
    </source>
</evidence>
<evidence type="ECO:0000305" key="3"/>
<organism>
    <name type="scientific">Mycobacterium sp. (strain JLS)</name>
    <dbReference type="NCBI Taxonomy" id="164757"/>
    <lineage>
        <taxon>Bacteria</taxon>
        <taxon>Bacillati</taxon>
        <taxon>Actinomycetota</taxon>
        <taxon>Actinomycetes</taxon>
        <taxon>Mycobacteriales</taxon>
        <taxon>Mycobacteriaceae</taxon>
        <taxon>Mycobacterium</taxon>
    </lineage>
</organism>
<proteinExistence type="inferred from homology"/>
<protein>
    <recommendedName>
        <fullName evidence="1">Large ribosomal subunit protein bL32</fullName>
    </recommendedName>
    <alternativeName>
        <fullName evidence="3">50S ribosomal protein L32</fullName>
    </alternativeName>
</protein>
<feature type="chain" id="PRO_0000296506" description="Large ribosomal subunit protein bL32">
    <location>
        <begin position="1"/>
        <end position="57"/>
    </location>
</feature>
<feature type="region of interest" description="Disordered" evidence="2">
    <location>
        <begin position="1"/>
        <end position="22"/>
    </location>
</feature>
<feature type="compositionally biased region" description="Basic residues" evidence="2">
    <location>
        <begin position="1"/>
        <end position="20"/>
    </location>
</feature>
<sequence length="57" mass="6562">MAVPKRRMSRSNTRSRRAQWKAKPTELVGVTVAGQQHKVPRRLLKAARLGLIDLDRR</sequence>
<name>RL32_MYCSJ</name>
<reference key="1">
    <citation type="submission" date="2007-02" db="EMBL/GenBank/DDBJ databases">
        <title>Complete sequence of Mycobacterium sp. JLS.</title>
        <authorList>
            <consortium name="US DOE Joint Genome Institute"/>
            <person name="Copeland A."/>
            <person name="Lucas S."/>
            <person name="Lapidus A."/>
            <person name="Barry K."/>
            <person name="Detter J.C."/>
            <person name="Glavina del Rio T."/>
            <person name="Hammon N."/>
            <person name="Israni S."/>
            <person name="Dalin E."/>
            <person name="Tice H."/>
            <person name="Pitluck S."/>
            <person name="Chain P."/>
            <person name="Malfatti S."/>
            <person name="Shin M."/>
            <person name="Vergez L."/>
            <person name="Schmutz J."/>
            <person name="Larimer F."/>
            <person name="Land M."/>
            <person name="Hauser L."/>
            <person name="Kyrpides N."/>
            <person name="Mikhailova N."/>
            <person name="Miller C.D."/>
            <person name="Anderson A.J."/>
            <person name="Sims R.C."/>
            <person name="Richardson P."/>
        </authorList>
    </citation>
    <scope>NUCLEOTIDE SEQUENCE [LARGE SCALE GENOMIC DNA]</scope>
    <source>
        <strain>JLS</strain>
    </source>
</reference>
<keyword id="KW-0687">Ribonucleoprotein</keyword>
<keyword id="KW-0689">Ribosomal protein</keyword>
<comment type="similarity">
    <text evidence="1">Belongs to the bacterial ribosomal protein bL32 family.</text>
</comment>
<gene>
    <name evidence="1" type="primary">rpmF</name>
    <name type="ordered locus">Mjls_4682</name>
</gene>
<accession>A3Q5M0</accession>